<comment type="function">
    <text>Could act as a receptor for an unknown ligand.</text>
</comment>
<comment type="catalytic activity">
    <reaction>
        <text>ATP = 3',5'-cyclic AMP + diphosphate</text>
        <dbReference type="Rhea" id="RHEA:15389"/>
        <dbReference type="ChEBI" id="CHEBI:30616"/>
        <dbReference type="ChEBI" id="CHEBI:33019"/>
        <dbReference type="ChEBI" id="CHEBI:58165"/>
        <dbReference type="EC" id="4.6.1.1"/>
    </reaction>
</comment>
<comment type="cofactor">
    <cofactor evidence="1">
        <name>Mg(2+)</name>
        <dbReference type="ChEBI" id="CHEBI:18420"/>
    </cofactor>
    <text evidence="1">Binds 1 Mg(2+) ion per subunit.</text>
</comment>
<comment type="subcellular location">
    <subcellularLocation>
        <location evidence="6">Membrane</location>
        <topology evidence="6">Multi-pass membrane protein</topology>
    </subcellularLocation>
</comment>
<comment type="developmental stage">
    <text>Expressed in the insect stage (promastigote) but not in the mammalian host stage of the parasite life cycle.</text>
</comment>
<comment type="similarity">
    <text evidence="6">Belongs to the adenylyl cyclase class-3 family.</text>
</comment>
<name>CYAA_LEIDO</name>
<accession>Q27675</accession>
<gene>
    <name type="primary">RAC-A</name>
</gene>
<keyword id="KW-0067">ATP-binding</keyword>
<keyword id="KW-0115">cAMP biosynthesis</keyword>
<keyword id="KW-0325">Glycoprotein</keyword>
<keyword id="KW-0456">Lyase</keyword>
<keyword id="KW-0460">Magnesium</keyword>
<keyword id="KW-0472">Membrane</keyword>
<keyword id="KW-0479">Metal-binding</keyword>
<keyword id="KW-0547">Nucleotide-binding</keyword>
<keyword id="KW-0675">Receptor</keyword>
<keyword id="KW-0812">Transmembrane</keyword>
<keyword id="KW-1133">Transmembrane helix</keyword>
<evidence type="ECO:0000250" key="1"/>
<evidence type="ECO:0000250" key="2">
    <source>
        <dbReference type="UniProtKB" id="Q99280"/>
    </source>
</evidence>
<evidence type="ECO:0000255" key="3"/>
<evidence type="ECO:0000255" key="4">
    <source>
        <dbReference type="PROSITE-ProRule" id="PRU00099"/>
    </source>
</evidence>
<evidence type="ECO:0000256" key="5">
    <source>
        <dbReference type="SAM" id="MobiDB-lite"/>
    </source>
</evidence>
<evidence type="ECO:0000305" key="6"/>
<sequence length="1380" mass="151694">MAMQIRPSLGGCLRHGGAGDHAARRLSRLRAAKVFVPTAVVCVLLCCAPWVMAEITNDAEREPVYILNAMYSTEAYTNEDAKALWTGMDMAFYNSHYKAAGGRPIKILHPDPDQDNLYDIAEVILHSLARQEKLLAVLGPYLDGRLTAALSNADVVQSGLMLIAPFTGSSGVRTWSDSVYFTRAEPMVELKVVLMHIVNRLRARRVAFMRLTGMHFGGEELTYVQDTLTSLLRDPAVLYTVPYSESSVEVDEEAFDAMADTNPQVIIVWAAPVQQVIYFLEKVLTDPRTSSAYVISCSMIQRVVFDVYKRLLSAGSIKPQDGRILASATTSPVSGEGLKYMEVLKAQMSNYIENSGSFDYYPDDDSTETLGRKARSEAPLSRKYTVDEFFQAHPSIAKLMALGWLSGTLVQQTLEQTDWIVNRSTYKAGLFNQNRFVIGGDYVLGDYGGPCEPLAQFLGASCYCNQGGHSSILTVLQNASWDIVPDSSFKYPQSECNSSKSQIVKAVSVLALLNQGYPKLIDAGMQLNEVLPHAFDDNLCKGYKVSSIFLRVETAKAQQLFDAEVSNYSVDIIAGPIFQALDVGEIFVLNPLYNHPQLRTEKRNYVYLMPTLEQQIYVMYSKIDALRTRTDVFEDTAVVLRGYSAQEVVEISEILFKTAGTFNLPDPSVATISFTDSLRGLLSPRAINVVIGMKDGDSAHFANFLAKYTDVMVVVCFDELTMYYEELRATFSVQPTSVQARLMSFSSLPLWTDASAEAKARWPILGHFHKIFPDPINHTPSLLRDVIIAGFIQELVSTTTVAETKLLTNAVYINGGVTTYGFTLGNFEWGCTATTSGDSCVYKNYGASNIEILSIQRMLDPTVPQLSSPSTPTMEYRPRQRSHALTPAQRNGLIAGCVVGAVVLIATCTLLLYCCMDNRNNDAAPKDGDEPVTLLFTDIESSTALWAALPQLMSDAIAAHHRVIRQLVKKYGCYEVKTIGDSFMIACRSAHSAVSLACEIQTKLLKHDWGTEALDRAYREFELARVDTLDDYEPPTARLSEEEYAALWCGLRVRVGIHTGLTDIRYDEVTKGYDYYGDTSNMAARTEAVANGGQVVATEAAWWALSNDERAGIAHTAMGPQGLRGVPFAVEMFQLNAVPGRRHAALRTEIEAILPDDTATDTASSAAGALLSSVETMSDPAAGIAFVLASCFAPYPVAQRVRELQPLLSKWGVGAPPRSRLVSEEDYCQGLMNRLAIRIATVSQARLRLTREDAADGKFKLASSEALNPLAREGDSAAGGVRPRLPGSPVTSLPAGGSSSMREWRVFTRLMNDTQHPSVTHLSQQRPSNLTSFTEAQDAAFPLNAHCGPESRVENSGADDEEIVIVRVSRNPHYARHAFE</sequence>
<organism>
    <name type="scientific">Leishmania donovani</name>
    <dbReference type="NCBI Taxonomy" id="5661"/>
    <lineage>
        <taxon>Eukaryota</taxon>
        <taxon>Discoba</taxon>
        <taxon>Euglenozoa</taxon>
        <taxon>Kinetoplastea</taxon>
        <taxon>Metakinetoplastina</taxon>
        <taxon>Trypanosomatida</taxon>
        <taxon>Trypanosomatidae</taxon>
        <taxon>Leishmaniinae</taxon>
        <taxon>Leishmania</taxon>
    </lineage>
</organism>
<protein>
    <recommendedName>
        <fullName>Receptor-type adenylate cyclase A</fullName>
        <ecNumber>4.6.1.1</ecNumber>
    </recommendedName>
    <alternativeName>
        <fullName>ATP pyrophosphate-lyase</fullName>
    </alternativeName>
    <alternativeName>
        <fullName>Adenylyl cyclase</fullName>
    </alternativeName>
</protein>
<dbReference type="EC" id="4.6.1.1"/>
<dbReference type="EMBL" id="U17042">
    <property type="protein sequence ID" value="AAA74998.1"/>
    <property type="molecule type" value="Genomic_DNA"/>
</dbReference>
<dbReference type="PIR" id="T18309">
    <property type="entry name" value="T18309"/>
</dbReference>
<dbReference type="SMR" id="Q27675"/>
<dbReference type="GlyCosmos" id="Q27675">
    <property type="glycosylation" value="4 sites, No reported glycans"/>
</dbReference>
<dbReference type="VEuPathDB" id="TriTrypDB:LdBPK_170120.1"/>
<dbReference type="VEuPathDB" id="TriTrypDB:LdCL_170007000"/>
<dbReference type="VEuPathDB" id="TriTrypDB:LDHU3_17.0340"/>
<dbReference type="GO" id="GO:0016020">
    <property type="term" value="C:membrane"/>
    <property type="evidence" value="ECO:0007669"/>
    <property type="project" value="UniProtKB-SubCell"/>
</dbReference>
<dbReference type="GO" id="GO:0004016">
    <property type="term" value="F:adenylate cyclase activity"/>
    <property type="evidence" value="ECO:0007669"/>
    <property type="project" value="UniProtKB-EC"/>
</dbReference>
<dbReference type="GO" id="GO:0005524">
    <property type="term" value="F:ATP binding"/>
    <property type="evidence" value="ECO:0007669"/>
    <property type="project" value="UniProtKB-KW"/>
</dbReference>
<dbReference type="GO" id="GO:0046872">
    <property type="term" value="F:metal ion binding"/>
    <property type="evidence" value="ECO:0007669"/>
    <property type="project" value="UniProtKB-KW"/>
</dbReference>
<dbReference type="GO" id="GO:0006171">
    <property type="term" value="P:cAMP biosynthetic process"/>
    <property type="evidence" value="ECO:0007669"/>
    <property type="project" value="UniProtKB-KW"/>
</dbReference>
<dbReference type="GO" id="GO:0035556">
    <property type="term" value="P:intracellular signal transduction"/>
    <property type="evidence" value="ECO:0007669"/>
    <property type="project" value="InterPro"/>
</dbReference>
<dbReference type="CDD" id="cd07556">
    <property type="entry name" value="Nucleotidyl_cyc_III"/>
    <property type="match status" value="1"/>
</dbReference>
<dbReference type="FunFam" id="3.30.70.1230:FF:000022">
    <property type="entry name" value="Receptor-type adenylate cyclase GRESAG 4, putative"/>
    <property type="match status" value="1"/>
</dbReference>
<dbReference type="Gene3D" id="3.40.50.2300">
    <property type="match status" value="2"/>
</dbReference>
<dbReference type="Gene3D" id="3.30.70.1230">
    <property type="entry name" value="Nucleotide cyclase"/>
    <property type="match status" value="1"/>
</dbReference>
<dbReference type="InterPro" id="IPR001054">
    <property type="entry name" value="A/G_cyclase"/>
</dbReference>
<dbReference type="InterPro" id="IPR050697">
    <property type="entry name" value="Adenylyl/Guanylyl_Cyclase_3/4"/>
</dbReference>
<dbReference type="InterPro" id="IPR029787">
    <property type="entry name" value="Nucleotide_cyclase"/>
</dbReference>
<dbReference type="PANTHER" id="PTHR43081:SF1">
    <property type="entry name" value="ADENYLATE CYCLASE, TERMINAL-DIFFERENTIATION SPECIFIC"/>
    <property type="match status" value="1"/>
</dbReference>
<dbReference type="PANTHER" id="PTHR43081">
    <property type="entry name" value="ADENYLATE CYCLASE, TERMINAL-DIFFERENTIATION SPECIFIC-RELATED"/>
    <property type="match status" value="1"/>
</dbReference>
<dbReference type="Pfam" id="PF00211">
    <property type="entry name" value="Guanylate_cyc"/>
    <property type="match status" value="1"/>
</dbReference>
<dbReference type="Pfam" id="PF25493">
    <property type="entry name" value="Peripla_BP_A-cyclase"/>
    <property type="match status" value="1"/>
</dbReference>
<dbReference type="Pfam" id="PF25495">
    <property type="entry name" value="Peripla_BP_A-cyclase_1"/>
    <property type="match status" value="1"/>
</dbReference>
<dbReference type="SMART" id="SM00044">
    <property type="entry name" value="CYCc"/>
    <property type="match status" value="1"/>
</dbReference>
<dbReference type="SUPFAM" id="SSF55073">
    <property type="entry name" value="Nucleotide cyclase"/>
    <property type="match status" value="1"/>
</dbReference>
<dbReference type="PROSITE" id="PS50125">
    <property type="entry name" value="GUANYLATE_CYCLASE_2"/>
    <property type="match status" value="1"/>
</dbReference>
<reference key="1">
    <citation type="journal article" date="1995" name="J. Biol. Chem.">
        <title>A family of putative receptor-adenylate cyclases from Leishmania donovani.</title>
        <authorList>
            <person name="Sanchez M.A."/>
            <person name="Zeoli D."/>
            <person name="Klamo E.M."/>
            <person name="Kavanaugh M.P."/>
            <person name="Landfear S.M."/>
        </authorList>
    </citation>
    <scope>NUCLEOTIDE SEQUENCE [GENOMIC DNA]</scope>
    <source>
        <strain>MHOM/SD/62/1S</strain>
    </source>
</reference>
<proteinExistence type="evidence at transcript level"/>
<feature type="chain" id="PRO_0000195734" description="Receptor-type adenylate cyclase A">
    <location>
        <begin position="1"/>
        <end position="1380"/>
    </location>
</feature>
<feature type="topological domain" description="Cytoplasmic" evidence="3">
    <location>
        <begin position="1"/>
        <end position="34"/>
    </location>
</feature>
<feature type="transmembrane region" description="Helical" evidence="3">
    <location>
        <begin position="35"/>
        <end position="55"/>
    </location>
</feature>
<feature type="topological domain" description="Extracellular" evidence="3">
    <location>
        <begin position="56"/>
        <end position="891"/>
    </location>
</feature>
<feature type="transmembrane region" description="Helical" evidence="3">
    <location>
        <begin position="892"/>
        <end position="912"/>
    </location>
</feature>
<feature type="topological domain" description="Cytoplasmic" evidence="3">
    <location>
        <begin position="913"/>
        <end position="1380"/>
    </location>
</feature>
<feature type="domain" description="Guanylate cyclase" evidence="4">
    <location>
        <begin position="933"/>
        <end position="1087"/>
    </location>
</feature>
<feature type="region of interest" description="Disordered" evidence="5">
    <location>
        <begin position="1270"/>
        <end position="1298"/>
    </location>
</feature>
<feature type="binding site" evidence="2">
    <location>
        <position position="938"/>
    </location>
    <ligand>
        <name>Mg(2+)</name>
        <dbReference type="ChEBI" id="CHEBI:18420"/>
    </ligand>
</feature>
<feature type="binding site" evidence="2">
    <location>
        <position position="981"/>
    </location>
    <ligand>
        <name>Mg(2+)</name>
        <dbReference type="ChEBI" id="CHEBI:18420"/>
    </ligand>
</feature>
<feature type="glycosylation site" description="N-linked (GlcNAc...) asparagine" evidence="3">
    <location>
        <position position="422"/>
    </location>
</feature>
<feature type="glycosylation site" description="N-linked (GlcNAc...) asparagine" evidence="3">
    <location>
        <position position="478"/>
    </location>
</feature>
<feature type="glycosylation site" description="N-linked (GlcNAc...) asparagine" evidence="3">
    <location>
        <position position="497"/>
    </location>
</feature>
<feature type="glycosylation site" description="N-linked (GlcNAc...) asparagine" evidence="3">
    <location>
        <position position="567"/>
    </location>
</feature>